<comment type="function">
    <text evidence="1">Forms an icosahedral capsid with a T=7 symmetry and a 50 nm diameter. The capsid is composed of 72 pentamers linked to each other by disulfide bonds and associated with L2 proteins. Binds to heparan sulfate proteoglycans on cell surface of basal layer keratinocytes to provide initial virion attachment. This binding mediates a conformational change in the virus capsid that facilitates efficient infection. The virion enters the host cell via endocytosis. During virus trafficking, L1 protein dissociates from the viral DNA and the genomic DNA is released to the host nucleus. The virion assembly takes place within the cell nucleus. Encapsulates the genomic DNA together with protein L2.</text>
</comment>
<comment type="subunit">
    <text evidence="1">Self-assembles into homopentamers. The capsid has an icosahedral symmetry and consists of 72 capsomers, with each capsomer being a pentamer of L1. Interacts with the minor capsid protein L2; this interaction is necessary for viral genome encapsidation. Interacts with protein E2; this interaction enhances E2-dependent replication and transcription activation.</text>
</comment>
<comment type="subcellular location">
    <subcellularLocation>
        <location evidence="1">Virion</location>
    </subcellularLocation>
    <subcellularLocation>
        <location evidence="1">Host nucleus</location>
    </subcellularLocation>
</comment>
<comment type="similarity">
    <text evidence="1">Belongs to the papillomaviridae L1 protein family.</text>
</comment>
<protein>
    <recommendedName>
        <fullName evidence="1">Major capsid protein L1</fullName>
    </recommendedName>
</protein>
<name>VL1_HPV51</name>
<accession>P26536</accession>
<accession>Q90081</accession>
<evidence type="ECO:0000255" key="1">
    <source>
        <dbReference type="HAMAP-Rule" id="MF_04002"/>
    </source>
</evidence>
<evidence type="ECO:0000256" key="2">
    <source>
        <dbReference type="SAM" id="MobiDB-lite"/>
    </source>
</evidence>
<reference key="1">
    <citation type="journal article" date="1991" name="J. Virol.">
        <title>Biologic properties and nucleotide sequence analysis of human papillomavirus type 51.</title>
        <authorList>
            <person name="Lungu O."/>
            <person name="Crum C.P."/>
            <person name="Silverstein S.J."/>
        </authorList>
    </citation>
    <scope>NUCLEOTIDE SEQUENCE [GENOMIC DNA]</scope>
</reference>
<reference key="2">
    <citation type="journal article" date="1992" name="J. Clin. Microbiol.">
        <title>General primer polymerase chain reaction in combination with sequence analysis for identification of potentially novel human papillomavirus genotypes in cervical lesions.</title>
        <authorList>
            <person name="van den Brule A.J."/>
            <person name="Snijders P.J."/>
            <person name="Raaphorst P.M."/>
            <person name="Schrijnemakers H.F."/>
            <person name="Delius H."/>
            <person name="Gissmann L."/>
            <person name="Meijer C.J."/>
            <person name="Walboomers J.M."/>
        </authorList>
    </citation>
    <scope>NUCLEOTIDE SEQUENCE [GENOMIC DNA] OF 337-369</scope>
</reference>
<feature type="chain" id="PRO_0000133534" description="Major capsid protein L1">
    <location>
        <begin position="1"/>
        <end position="504"/>
    </location>
</feature>
<feature type="region of interest" description="Disordered" evidence="2">
    <location>
        <begin position="476"/>
        <end position="504"/>
    </location>
</feature>
<feature type="compositionally biased region" description="Low complexity" evidence="2">
    <location>
        <begin position="486"/>
        <end position="496"/>
    </location>
</feature>
<feature type="disulfide bond" description="Interchain (with C-428)" evidence="1">
    <location>
        <position position="174"/>
    </location>
</feature>
<feature type="disulfide bond" description="Interchain (with C-174)" evidence="1">
    <location>
        <position position="428"/>
    </location>
</feature>
<keyword id="KW-0167">Capsid protein</keyword>
<keyword id="KW-1015">Disulfide bond</keyword>
<keyword id="KW-1048">Host nucleus</keyword>
<keyword id="KW-0945">Host-virus interaction</keyword>
<keyword id="KW-0426">Late protein</keyword>
<keyword id="KW-1145">T=7 icosahedral capsid protein</keyword>
<keyword id="KW-1161">Viral attachment to host cell</keyword>
<keyword id="KW-1162">Viral penetration into host cytoplasm</keyword>
<keyword id="KW-0946">Virion</keyword>
<keyword id="KW-1164">Virus endocytosis by host</keyword>
<keyword id="KW-1160">Virus entry into host cell</keyword>
<dbReference type="EMBL" id="M62877">
    <property type="status" value="NOT_ANNOTATED_CDS"/>
    <property type="molecule type" value="Genomic_DNA"/>
</dbReference>
<dbReference type="EMBL" id="S40272">
    <property type="protein sequence ID" value="AAB22568.1"/>
    <property type="molecule type" value="Genomic_DNA"/>
</dbReference>
<dbReference type="PIR" id="G40415">
    <property type="entry name" value="P1WL51"/>
</dbReference>
<dbReference type="SMR" id="P26536"/>
<dbReference type="Proteomes" id="UP000009125">
    <property type="component" value="Segment"/>
</dbReference>
<dbReference type="GO" id="GO:0042025">
    <property type="term" value="C:host cell nucleus"/>
    <property type="evidence" value="ECO:0007669"/>
    <property type="project" value="UniProtKB-SubCell"/>
</dbReference>
<dbReference type="GO" id="GO:0039620">
    <property type="term" value="C:T=7 icosahedral viral capsid"/>
    <property type="evidence" value="ECO:0007669"/>
    <property type="project" value="UniProtKB-UniRule"/>
</dbReference>
<dbReference type="GO" id="GO:0005198">
    <property type="term" value="F:structural molecule activity"/>
    <property type="evidence" value="ECO:0007669"/>
    <property type="project" value="UniProtKB-UniRule"/>
</dbReference>
<dbReference type="GO" id="GO:0075509">
    <property type="term" value="P:endocytosis involved in viral entry into host cell"/>
    <property type="evidence" value="ECO:0007669"/>
    <property type="project" value="UniProtKB-KW"/>
</dbReference>
<dbReference type="GO" id="GO:0019062">
    <property type="term" value="P:virion attachment to host cell"/>
    <property type="evidence" value="ECO:0007669"/>
    <property type="project" value="UniProtKB-UniRule"/>
</dbReference>
<dbReference type="Gene3D" id="2.60.175.20">
    <property type="entry name" value="Major capsid L1 (late) superfamily, Papillomavirus"/>
    <property type="match status" value="2"/>
</dbReference>
<dbReference type="HAMAP" id="MF_04002">
    <property type="entry name" value="PPV_L1"/>
    <property type="match status" value="1"/>
</dbReference>
<dbReference type="InterPro" id="IPR002210">
    <property type="entry name" value="Capsid_L1_Papillomavir"/>
</dbReference>
<dbReference type="InterPro" id="IPR036973">
    <property type="entry name" value="Capsid_L1_sf_Papillomavir"/>
</dbReference>
<dbReference type="InterPro" id="IPR011222">
    <property type="entry name" value="dsDNA_vir_gr_I_capsid"/>
</dbReference>
<dbReference type="Pfam" id="PF00500">
    <property type="entry name" value="Late_protein_L1"/>
    <property type="match status" value="1"/>
</dbReference>
<dbReference type="PRINTS" id="PR00865">
    <property type="entry name" value="HPVCAPSIDL1"/>
</dbReference>
<dbReference type="SUPFAM" id="SSF88648">
    <property type="entry name" value="Group I dsDNA viruses"/>
    <property type="match status" value="1"/>
</dbReference>
<gene>
    <name evidence="1" type="primary">L1</name>
</gene>
<organismHost>
    <name type="scientific">Homo sapiens</name>
    <name type="common">Human</name>
    <dbReference type="NCBI Taxonomy" id="9606"/>
</organismHost>
<sequence>MALWRTNDSKVYLPPAPVSRIVNTEEYITRTGIYYYAGSSRLITLGHPYFPIPKTSTRAAIPKVSAFQYRVFRVQLPDPNKFGLPDPNLYNPDTDRLVWGCVGVEVGRGQPLGVGLSGHPLFNKYDDTENSRIANGNAQQDVRDNTSVDNKQTQLCIIGCAPPIGEHWGIGTTCKNTPVPPGDCPPLELVSSVIQDGDMIDTGFGAMDFAALQATKSDVPLDISQSVCKYPDYLKMSADTYGNSMFFHLRREQIFARHYYNKLVGVGEDIPNDYYIKGSGNGRDPIESYIYSATPSGSMITSDSQIFNKPYWLHRAQGHNNGICWNNQLFITCVDTTRSTNLTISTATAAVSPTFTPSNFKQYIRHGEEYELQFIFQLCKITLTTEVMAYLHTMDPTILEQWNFGLTLPPSASLEDAYRFVRNAATSCQKDTPPQAKPDPLAKYKFWDVDLKERFSLDLDQFALGRKFLLQVGVQRKPRPGLKRPASSASSSSSSSAKRKRVKK</sequence>
<organism>
    <name type="scientific">Human papillomavirus 51</name>
    <dbReference type="NCBI Taxonomy" id="10595"/>
    <lineage>
        <taxon>Viruses</taxon>
        <taxon>Monodnaviria</taxon>
        <taxon>Shotokuvirae</taxon>
        <taxon>Cossaviricota</taxon>
        <taxon>Papovaviricetes</taxon>
        <taxon>Zurhausenvirales</taxon>
        <taxon>Papillomaviridae</taxon>
        <taxon>Firstpapillomavirinae</taxon>
        <taxon>Alphapapillomavirus</taxon>
        <taxon>Alphapapillomavirus 5</taxon>
    </lineage>
</organism>
<proteinExistence type="inferred from homology"/>